<dbReference type="EMBL" id="EF672576">
    <property type="protein sequence ID" value="ABV53250.1"/>
    <property type="molecule type" value="Genomic_RNA"/>
</dbReference>
<dbReference type="Proteomes" id="UP000006368">
    <property type="component" value="Genome"/>
</dbReference>
<dbReference type="GO" id="GO:0030430">
    <property type="term" value="C:host cell cytoplasm"/>
    <property type="evidence" value="ECO:0007669"/>
    <property type="project" value="UniProtKB-SubCell"/>
</dbReference>
<dbReference type="GO" id="GO:0016887">
    <property type="term" value="F:ATP hydrolysis activity"/>
    <property type="evidence" value="ECO:0007669"/>
    <property type="project" value="UniProtKB-UniRule"/>
</dbReference>
<dbReference type="GO" id="GO:0000287">
    <property type="term" value="F:magnesium ion binding"/>
    <property type="evidence" value="ECO:0007669"/>
    <property type="project" value="UniProtKB-UniRule"/>
</dbReference>
<dbReference type="GO" id="GO:0000166">
    <property type="term" value="F:nucleotide binding"/>
    <property type="evidence" value="ECO:0007669"/>
    <property type="project" value="UniProtKB-UniRule"/>
</dbReference>
<dbReference type="GO" id="GO:0003723">
    <property type="term" value="F:RNA binding"/>
    <property type="evidence" value="ECO:0007669"/>
    <property type="project" value="UniProtKB-UniRule"/>
</dbReference>
<dbReference type="GO" id="GO:0019079">
    <property type="term" value="P:viral genome replication"/>
    <property type="evidence" value="ECO:0007669"/>
    <property type="project" value="UniProtKB-UniRule"/>
</dbReference>
<dbReference type="HAMAP" id="MF_04092">
    <property type="entry name" value="ROTA_NSP5"/>
    <property type="match status" value="1"/>
</dbReference>
<dbReference type="InterPro" id="IPR002512">
    <property type="entry name" value="Rotavirus_A/C_NSP5"/>
</dbReference>
<dbReference type="Pfam" id="PF01525">
    <property type="entry name" value="Rota_NS26"/>
    <property type="match status" value="2"/>
</dbReference>
<dbReference type="PIRSF" id="PIRSF004006">
    <property type="entry name" value="Rota_NS26"/>
    <property type="match status" value="1"/>
</dbReference>
<feature type="chain" id="PRO_0000369505" description="Non-structural protein 5">
    <location>
        <begin position="1"/>
        <end position="197"/>
    </location>
</feature>
<feature type="region of interest" description="Disordered" evidence="2">
    <location>
        <begin position="130"/>
        <end position="167"/>
    </location>
</feature>
<feature type="compositionally biased region" description="Basic residues" evidence="2">
    <location>
        <begin position="131"/>
        <end position="146"/>
    </location>
</feature>
<feature type="compositionally biased region" description="Acidic residues" evidence="2">
    <location>
        <begin position="152"/>
        <end position="165"/>
    </location>
</feature>
<feature type="binding site" evidence="1">
    <location>
        <position position="92"/>
    </location>
    <ligand>
        <name>Mg(2+)</name>
        <dbReference type="ChEBI" id="CHEBI:18420"/>
    </ligand>
</feature>
<feature type="modified residue" description="Phosphoserine; by host CK1" evidence="1">
    <location>
        <position position="67"/>
    </location>
</feature>
<feature type="modified residue" description="Phosphoserine; by host" evidence="1">
    <location>
        <position position="153"/>
    </location>
</feature>
<feature type="modified residue" description="Phosphoserine; by host" evidence="1">
    <location>
        <position position="155"/>
    </location>
</feature>
<feature type="modified residue" description="Phosphoserine; by host" evidence="1">
    <location>
        <position position="163"/>
    </location>
</feature>
<feature type="modified residue" description="Phosphoserine; by host" evidence="1">
    <location>
        <position position="165"/>
    </location>
</feature>
<reference key="1">
    <citation type="journal article" date="2008" name="J. Virol.">
        <title>Group A human rotavirus genomics: evidence that gene constellations are influenced by viral protein interactions.</title>
        <authorList>
            <person name="Heiman E.M."/>
            <person name="McDonald S.M."/>
            <person name="Barro M."/>
            <person name="Taraporewala Z.F."/>
            <person name="Bar-Magen T."/>
            <person name="Patton J.T."/>
        </authorList>
    </citation>
    <scope>NUCLEOTIDE SEQUENCE [GENOMIC RNA]</scope>
</reference>
<proteinExistence type="inferred from homology"/>
<organismHost>
    <name type="scientific">Homo sapiens</name>
    <name type="common">Human</name>
    <dbReference type="NCBI Taxonomy" id="9606"/>
</organismHost>
<organism>
    <name type="scientific">Rotavirus A (strain RVA/Human/United States/D/1974/G1P1A[8])</name>
    <name type="common">RV-A</name>
    <dbReference type="NCBI Taxonomy" id="578831"/>
    <lineage>
        <taxon>Viruses</taxon>
        <taxon>Riboviria</taxon>
        <taxon>Orthornavirae</taxon>
        <taxon>Duplornaviricota</taxon>
        <taxon>Resentoviricetes</taxon>
        <taxon>Reovirales</taxon>
        <taxon>Sedoreoviridae</taxon>
        <taxon>Rotavirus</taxon>
        <taxon>Rotavirus A</taxon>
    </lineage>
</organism>
<name>NSP5_ROTAD</name>
<comment type="function">
    <text evidence="1">Plays an essential role in the viral genome replication. Participates, together with NSP2, in the formation of viral factories (viroplasms), which are large inclusions in the host cytoplasm where replication intermediates are assembled and viral RNA replication takes place. Orchestrates the recruitment of viroplasmic proteins such as capsid proteins to these factories. Participates in the selective exclusion of host proteins from stress granules (SG) and P bodies (PB). Also participates in the sequestration of these remodeled organelles in viral factories.</text>
</comment>
<comment type="cofactor">
    <cofactor evidence="1">
        <name>Mg(2+)</name>
        <dbReference type="ChEBI" id="CHEBI:18420"/>
    </cofactor>
</comment>
<comment type="subunit">
    <text evidence="1">Homodimer. Interacts with VP1. Interacts with VP2. Interacts with NSP2; this interaction leads to up-regulation of NSP5 hyperphosphorylation and formation of virus factories. Interacts with NSP6. Participates in the selective exclusion of host proteins from stress granules (SG) and P bodies (PB). Also participates in the sequestration of these remodeled organelles in viral factories.</text>
</comment>
<comment type="subcellular location">
    <subcellularLocation>
        <location evidence="1">Host cytoplasm</location>
    </subcellularLocation>
    <text evidence="1">Found in spherical cytoplasmic structures, called virus factories, that appear early after infection and are the site of viral replication and packaging.</text>
</comment>
<comment type="PTM">
    <text evidence="1">O-glycosylated.</text>
</comment>
<comment type="PTM">
    <text evidence="1">Hyperphosphorylated on serine residues, when in dimeric form. Phosphorylation by host CK1 is required for the hyperphosphorylation of NSP5 dimer.</text>
</comment>
<comment type="similarity">
    <text evidence="1">Belongs to the rotavirus NSP5 family.</text>
</comment>
<protein>
    <recommendedName>
        <fullName evidence="1">Non-structural protein 5</fullName>
        <shortName evidence="1">NSP5</shortName>
    </recommendedName>
    <alternativeName>
        <fullName evidence="1">NS26</fullName>
    </alternativeName>
</protein>
<evidence type="ECO:0000255" key="1">
    <source>
        <dbReference type="HAMAP-Rule" id="MF_04092"/>
    </source>
</evidence>
<evidence type="ECO:0000256" key="2">
    <source>
        <dbReference type="SAM" id="MobiDB-lite"/>
    </source>
</evidence>
<sequence>MSLSIDVTSLPSISSSIFKNESSSTTSTLSGKSIGRNEQYVSSDIEAFNKYMLSKSLEDIGPSDSASNDPLTSFSIRSNAVKTNADAGVSMDSSTQSRPSSNVGCDQMDFSLTKGINVSASLDSCVSISTNHKKEKSKKDKSRKHYPRIEADSDSEDYVLDDSDSDDGKCKNCKYKKKYFALRMRMKQVAMQLIEDL</sequence>
<keyword id="KW-0325">Glycoprotein</keyword>
<keyword id="KW-1035">Host cytoplasm</keyword>
<keyword id="KW-0460">Magnesium</keyword>
<keyword id="KW-0479">Metal-binding</keyword>
<keyword id="KW-0547">Nucleotide-binding</keyword>
<keyword id="KW-0597">Phosphoprotein</keyword>
<keyword id="KW-1185">Reference proteome</keyword>
<keyword id="KW-0694">RNA-binding</keyword>
<accession>B3SRS5</accession>